<name>DEF22_ARATH</name>
<feature type="signal peptide" evidence="2">
    <location>
        <begin position="1"/>
        <end position="24"/>
    </location>
</feature>
<feature type="chain" id="PRO_0000379604" description="Defensin-like protein 22">
    <location>
        <begin position="25"/>
        <end position="82"/>
    </location>
</feature>
<feature type="disulfide bond" evidence="1">
    <location>
        <begin position="34"/>
        <end position="82"/>
    </location>
</feature>
<feature type="disulfide bond" evidence="1">
    <location>
        <begin position="44"/>
        <end position="69"/>
    </location>
</feature>
<feature type="disulfide bond" evidence="1">
    <location>
        <begin position="53"/>
        <end position="78"/>
    </location>
</feature>
<feature type="disulfide bond" evidence="1">
    <location>
        <begin position="57"/>
        <end position="80"/>
    </location>
</feature>
<sequence length="82" mass="8935">MAGLKVFSFALLLILTFSLIDVEGYNVENGGSLCCNNHPKFGKCNTKNDDQRCNSWCLNGCDNGKGGYCKSMSHGGQCHCYC</sequence>
<gene>
    <name type="ordered locus">At5g08315</name>
    <name type="ORF">F8L15</name>
</gene>
<organism>
    <name type="scientific">Arabidopsis thaliana</name>
    <name type="common">Mouse-ear cress</name>
    <dbReference type="NCBI Taxonomy" id="3702"/>
    <lineage>
        <taxon>Eukaryota</taxon>
        <taxon>Viridiplantae</taxon>
        <taxon>Streptophyta</taxon>
        <taxon>Embryophyta</taxon>
        <taxon>Tracheophyta</taxon>
        <taxon>Spermatophyta</taxon>
        <taxon>Magnoliopsida</taxon>
        <taxon>eudicotyledons</taxon>
        <taxon>Gunneridae</taxon>
        <taxon>Pentapetalae</taxon>
        <taxon>rosids</taxon>
        <taxon>malvids</taxon>
        <taxon>Brassicales</taxon>
        <taxon>Brassicaceae</taxon>
        <taxon>Camelineae</taxon>
        <taxon>Arabidopsis</taxon>
    </lineage>
</organism>
<protein>
    <recommendedName>
        <fullName>Defensin-like protein 22</fullName>
    </recommendedName>
</protein>
<accession>Q2V391</accession>
<dbReference type="EMBL" id="AL392174">
    <property type="status" value="NOT_ANNOTATED_CDS"/>
    <property type="molecule type" value="Genomic_DNA"/>
</dbReference>
<dbReference type="EMBL" id="CP002688">
    <property type="protein sequence ID" value="AED91282.1"/>
    <property type="molecule type" value="Genomic_DNA"/>
</dbReference>
<dbReference type="RefSeq" id="NP_001031854.1">
    <property type="nucleotide sequence ID" value="NM_001036777.2"/>
</dbReference>
<dbReference type="PaxDb" id="3702-AT5G08315.1"/>
<dbReference type="ProteomicsDB" id="224112"/>
<dbReference type="EnsemblPlants" id="AT5G08315.1">
    <property type="protein sequence ID" value="AT5G08315.1"/>
    <property type="gene ID" value="AT5G08315"/>
</dbReference>
<dbReference type="GeneID" id="3770708"/>
<dbReference type="Gramene" id="AT5G08315.1">
    <property type="protein sequence ID" value="AT5G08315.1"/>
    <property type="gene ID" value="AT5G08315"/>
</dbReference>
<dbReference type="KEGG" id="ath:AT5G08315"/>
<dbReference type="Araport" id="AT5G08315"/>
<dbReference type="TAIR" id="AT5G08315"/>
<dbReference type="HOGENOM" id="CLU_185732_0_0_1"/>
<dbReference type="InParanoid" id="Q2V391"/>
<dbReference type="OMA" id="NTKNDDQ"/>
<dbReference type="PhylomeDB" id="Q2V391"/>
<dbReference type="PRO" id="PR:Q2V391"/>
<dbReference type="Proteomes" id="UP000006548">
    <property type="component" value="Chromosome 5"/>
</dbReference>
<dbReference type="ExpressionAtlas" id="Q2V391">
    <property type="expression patterns" value="baseline"/>
</dbReference>
<dbReference type="GO" id="GO:0005576">
    <property type="term" value="C:extracellular region"/>
    <property type="evidence" value="ECO:0007669"/>
    <property type="project" value="UniProtKB-SubCell"/>
</dbReference>
<dbReference type="GO" id="GO:0050832">
    <property type="term" value="P:defense response to fungus"/>
    <property type="evidence" value="ECO:0007669"/>
    <property type="project" value="UniProtKB-KW"/>
</dbReference>
<dbReference type="GO" id="GO:0031640">
    <property type="term" value="P:killing of cells of another organism"/>
    <property type="evidence" value="ECO:0007669"/>
    <property type="project" value="UniProtKB-KW"/>
</dbReference>
<dbReference type="InterPro" id="IPR022618">
    <property type="entry name" value="Defensin-like_20-28"/>
</dbReference>
<dbReference type="PANTHER" id="PTHR34453">
    <property type="entry name" value="DEFENSIN-LIKE (DEFL) FAMILY PROTEIN-RELATED"/>
    <property type="match status" value="1"/>
</dbReference>
<dbReference type="PANTHER" id="PTHR34453:SF7">
    <property type="entry name" value="DEFENSIN-LIKE PROTEIN 22-RELATED"/>
    <property type="match status" value="1"/>
</dbReference>
<dbReference type="Pfam" id="PF10868">
    <property type="entry name" value="Defensin_like"/>
    <property type="match status" value="1"/>
</dbReference>
<comment type="subcellular location">
    <subcellularLocation>
        <location evidence="1">Secreted</location>
    </subcellularLocation>
</comment>
<comment type="similarity">
    <text evidence="3">Belongs to the DEFL family.</text>
</comment>
<reference key="1">
    <citation type="journal article" date="2000" name="Nature">
        <title>Sequence and analysis of chromosome 5 of the plant Arabidopsis thaliana.</title>
        <authorList>
            <person name="Tabata S."/>
            <person name="Kaneko T."/>
            <person name="Nakamura Y."/>
            <person name="Kotani H."/>
            <person name="Kato T."/>
            <person name="Asamizu E."/>
            <person name="Miyajima N."/>
            <person name="Sasamoto S."/>
            <person name="Kimura T."/>
            <person name="Hosouchi T."/>
            <person name="Kawashima K."/>
            <person name="Kohara M."/>
            <person name="Matsumoto M."/>
            <person name="Matsuno A."/>
            <person name="Muraki A."/>
            <person name="Nakayama S."/>
            <person name="Nakazaki N."/>
            <person name="Naruo K."/>
            <person name="Okumura S."/>
            <person name="Shinpo S."/>
            <person name="Takeuchi C."/>
            <person name="Wada T."/>
            <person name="Watanabe A."/>
            <person name="Yamada M."/>
            <person name="Yasuda M."/>
            <person name="Sato S."/>
            <person name="de la Bastide M."/>
            <person name="Huang E."/>
            <person name="Spiegel L."/>
            <person name="Gnoj L."/>
            <person name="O'Shaughnessy A."/>
            <person name="Preston R."/>
            <person name="Habermann K."/>
            <person name="Murray J."/>
            <person name="Johnson D."/>
            <person name="Rohlfing T."/>
            <person name="Nelson J."/>
            <person name="Stoneking T."/>
            <person name="Pepin K."/>
            <person name="Spieth J."/>
            <person name="Sekhon M."/>
            <person name="Armstrong J."/>
            <person name="Becker M."/>
            <person name="Belter E."/>
            <person name="Cordum H."/>
            <person name="Cordes M."/>
            <person name="Courtney L."/>
            <person name="Courtney W."/>
            <person name="Dante M."/>
            <person name="Du H."/>
            <person name="Edwards J."/>
            <person name="Fryman J."/>
            <person name="Haakensen B."/>
            <person name="Lamar E."/>
            <person name="Latreille P."/>
            <person name="Leonard S."/>
            <person name="Meyer R."/>
            <person name="Mulvaney E."/>
            <person name="Ozersky P."/>
            <person name="Riley A."/>
            <person name="Strowmatt C."/>
            <person name="Wagner-McPherson C."/>
            <person name="Wollam A."/>
            <person name="Yoakum M."/>
            <person name="Bell M."/>
            <person name="Dedhia N."/>
            <person name="Parnell L."/>
            <person name="Shah R."/>
            <person name="Rodriguez M."/>
            <person name="Hoon See L."/>
            <person name="Vil D."/>
            <person name="Baker J."/>
            <person name="Kirchoff K."/>
            <person name="Toth K."/>
            <person name="King L."/>
            <person name="Bahret A."/>
            <person name="Miller B."/>
            <person name="Marra M.A."/>
            <person name="Martienssen R."/>
            <person name="McCombie W.R."/>
            <person name="Wilson R.K."/>
            <person name="Murphy G."/>
            <person name="Bancroft I."/>
            <person name="Volckaert G."/>
            <person name="Wambutt R."/>
            <person name="Duesterhoeft A."/>
            <person name="Stiekema W."/>
            <person name="Pohl T."/>
            <person name="Entian K.-D."/>
            <person name="Terryn N."/>
            <person name="Hartley N."/>
            <person name="Bent E."/>
            <person name="Johnson S."/>
            <person name="Langham S.-A."/>
            <person name="McCullagh B."/>
            <person name="Robben J."/>
            <person name="Grymonprez B."/>
            <person name="Zimmermann W."/>
            <person name="Ramsperger U."/>
            <person name="Wedler H."/>
            <person name="Balke K."/>
            <person name="Wedler E."/>
            <person name="Peters S."/>
            <person name="van Staveren M."/>
            <person name="Dirkse W."/>
            <person name="Mooijman P."/>
            <person name="Klein Lankhorst R."/>
            <person name="Weitzenegger T."/>
            <person name="Bothe G."/>
            <person name="Rose M."/>
            <person name="Hauf J."/>
            <person name="Berneiser S."/>
            <person name="Hempel S."/>
            <person name="Feldpausch M."/>
            <person name="Lamberth S."/>
            <person name="Villarroel R."/>
            <person name="Gielen J."/>
            <person name="Ardiles W."/>
            <person name="Bents O."/>
            <person name="Lemcke K."/>
            <person name="Kolesov G."/>
            <person name="Mayer K.F.X."/>
            <person name="Rudd S."/>
            <person name="Schoof H."/>
            <person name="Schueller C."/>
            <person name="Zaccaria P."/>
            <person name="Mewes H.-W."/>
            <person name="Bevan M."/>
            <person name="Fransz P.F."/>
        </authorList>
    </citation>
    <scope>NUCLEOTIDE SEQUENCE [LARGE SCALE GENOMIC DNA]</scope>
    <source>
        <strain>cv. Columbia</strain>
    </source>
</reference>
<reference key="2">
    <citation type="journal article" date="2017" name="Plant J.">
        <title>Araport11: a complete reannotation of the Arabidopsis thaliana reference genome.</title>
        <authorList>
            <person name="Cheng C.Y."/>
            <person name="Krishnakumar V."/>
            <person name="Chan A.P."/>
            <person name="Thibaud-Nissen F."/>
            <person name="Schobel S."/>
            <person name="Town C.D."/>
        </authorList>
    </citation>
    <scope>GENOME REANNOTATION</scope>
    <source>
        <strain>cv. Columbia</strain>
    </source>
</reference>
<reference key="3">
    <citation type="journal article" date="2005" name="Plant Physiol.">
        <title>Genome organization of more than 300 defensin-like genes in Arabidopsis.</title>
        <authorList>
            <person name="Silverstein K.A.T."/>
            <person name="Graham M.A."/>
            <person name="Paape T.D."/>
            <person name="VandenBosch K.A."/>
        </authorList>
    </citation>
    <scope>GENE FAMILY</scope>
</reference>
<evidence type="ECO:0000250" key="1"/>
<evidence type="ECO:0000255" key="2"/>
<evidence type="ECO:0000305" key="3"/>
<proteinExistence type="evidence at transcript level"/>
<keyword id="KW-0929">Antimicrobial</keyword>
<keyword id="KW-1015">Disulfide bond</keyword>
<keyword id="KW-0295">Fungicide</keyword>
<keyword id="KW-0611">Plant defense</keyword>
<keyword id="KW-1185">Reference proteome</keyword>
<keyword id="KW-0964">Secreted</keyword>
<keyword id="KW-0732">Signal</keyword>